<accession>B9KNF0</accession>
<name>PLSY_CERSK</name>
<feature type="chain" id="PRO_1000149580" description="Glycerol-3-phosphate acyltransferase">
    <location>
        <begin position="1"/>
        <end position="201"/>
    </location>
</feature>
<feature type="transmembrane region" description="Helical" evidence="1">
    <location>
        <begin position="10"/>
        <end position="30"/>
    </location>
</feature>
<feature type="transmembrane region" description="Helical" evidence="1">
    <location>
        <begin position="59"/>
        <end position="79"/>
    </location>
</feature>
<feature type="transmembrane region" description="Helical" evidence="1">
    <location>
        <begin position="87"/>
        <end position="107"/>
    </location>
</feature>
<feature type="transmembrane region" description="Helical" evidence="1">
    <location>
        <begin position="116"/>
        <end position="136"/>
    </location>
</feature>
<feature type="transmembrane region" description="Helical" evidence="1">
    <location>
        <begin position="161"/>
        <end position="181"/>
    </location>
</feature>
<comment type="function">
    <text evidence="1">Catalyzes the transfer of an acyl group from acyl-phosphate (acyl-PO(4)) to glycerol-3-phosphate (G3P) to form lysophosphatidic acid (LPA). This enzyme utilizes acyl-phosphate as fatty acyl donor, but not acyl-CoA or acyl-ACP.</text>
</comment>
<comment type="catalytic activity">
    <reaction evidence="1">
        <text>an acyl phosphate + sn-glycerol 3-phosphate = a 1-acyl-sn-glycero-3-phosphate + phosphate</text>
        <dbReference type="Rhea" id="RHEA:34075"/>
        <dbReference type="ChEBI" id="CHEBI:43474"/>
        <dbReference type="ChEBI" id="CHEBI:57597"/>
        <dbReference type="ChEBI" id="CHEBI:57970"/>
        <dbReference type="ChEBI" id="CHEBI:59918"/>
        <dbReference type="EC" id="2.3.1.275"/>
    </reaction>
</comment>
<comment type="pathway">
    <text evidence="1">Lipid metabolism; phospholipid metabolism.</text>
</comment>
<comment type="subunit">
    <text evidence="1">Probably interacts with PlsX.</text>
</comment>
<comment type="subcellular location">
    <subcellularLocation>
        <location evidence="1">Cell inner membrane</location>
        <topology evidence="1">Multi-pass membrane protein</topology>
    </subcellularLocation>
</comment>
<comment type="similarity">
    <text evidence="1">Belongs to the PlsY family.</text>
</comment>
<gene>
    <name evidence="1" type="primary">plsY</name>
    <name type="ordered locus">RSKD131_2396</name>
</gene>
<organism>
    <name type="scientific">Cereibacter sphaeroides (strain KD131 / KCTC 12085)</name>
    <name type="common">Rhodobacter sphaeroides</name>
    <dbReference type="NCBI Taxonomy" id="557760"/>
    <lineage>
        <taxon>Bacteria</taxon>
        <taxon>Pseudomonadati</taxon>
        <taxon>Pseudomonadota</taxon>
        <taxon>Alphaproteobacteria</taxon>
        <taxon>Rhodobacterales</taxon>
        <taxon>Paracoccaceae</taxon>
        <taxon>Cereibacter</taxon>
    </lineage>
</organism>
<protein>
    <recommendedName>
        <fullName evidence="1">Glycerol-3-phosphate acyltransferase</fullName>
    </recommendedName>
    <alternativeName>
        <fullName evidence="1">Acyl-PO4 G3P acyltransferase</fullName>
    </alternativeName>
    <alternativeName>
        <fullName evidence="1">Acyl-phosphate--glycerol-3-phosphate acyltransferase</fullName>
    </alternativeName>
    <alternativeName>
        <fullName evidence="1">G3P acyltransferase</fullName>
        <shortName evidence="1">GPAT</shortName>
        <ecNumber evidence="1">2.3.1.275</ecNumber>
    </alternativeName>
    <alternativeName>
        <fullName evidence="1">Lysophosphatidic acid synthase</fullName>
        <shortName evidence="1">LPA synthase</shortName>
    </alternativeName>
</protein>
<sequence length="201" mass="20589">MPAIESGLWALILTGVLGYLLGSIPFGIVITRALGLGDLRKIGSGNIGATNVLRTGNKPAALATLLLDSGKGAIAVLIARAAVGEDAAQLAAFTSFLGHLFPVWLGFRGGKGVATFLGTLLALAWPVGLACCLTWLATAALGRISSLSALVAAASGVLWMILLGYGQMAALGAVLAVLIFIRHHANIRRILAGTEPRIGKK</sequence>
<dbReference type="EC" id="2.3.1.275" evidence="1"/>
<dbReference type="EMBL" id="CP001150">
    <property type="protein sequence ID" value="ACM02256.1"/>
    <property type="molecule type" value="Genomic_DNA"/>
</dbReference>
<dbReference type="RefSeq" id="WP_009563048.1">
    <property type="nucleotide sequence ID" value="NC_011963.1"/>
</dbReference>
<dbReference type="SMR" id="B9KNF0"/>
<dbReference type="GeneID" id="67447776"/>
<dbReference type="KEGG" id="rsk:RSKD131_2396"/>
<dbReference type="HOGENOM" id="CLU_081254_1_0_5"/>
<dbReference type="UniPathway" id="UPA00085"/>
<dbReference type="GO" id="GO:0005886">
    <property type="term" value="C:plasma membrane"/>
    <property type="evidence" value="ECO:0007669"/>
    <property type="project" value="UniProtKB-SubCell"/>
</dbReference>
<dbReference type="GO" id="GO:0043772">
    <property type="term" value="F:acyl-phosphate glycerol-3-phosphate acyltransferase activity"/>
    <property type="evidence" value="ECO:0007669"/>
    <property type="project" value="UniProtKB-UniRule"/>
</dbReference>
<dbReference type="GO" id="GO:0008654">
    <property type="term" value="P:phospholipid biosynthetic process"/>
    <property type="evidence" value="ECO:0007669"/>
    <property type="project" value="UniProtKB-UniRule"/>
</dbReference>
<dbReference type="HAMAP" id="MF_01043">
    <property type="entry name" value="PlsY"/>
    <property type="match status" value="1"/>
</dbReference>
<dbReference type="InterPro" id="IPR003811">
    <property type="entry name" value="G3P_acylTferase_PlsY"/>
</dbReference>
<dbReference type="NCBIfam" id="TIGR00023">
    <property type="entry name" value="glycerol-3-phosphate 1-O-acyltransferase PlsY"/>
    <property type="match status" value="1"/>
</dbReference>
<dbReference type="PANTHER" id="PTHR30309:SF0">
    <property type="entry name" value="GLYCEROL-3-PHOSPHATE ACYLTRANSFERASE-RELATED"/>
    <property type="match status" value="1"/>
</dbReference>
<dbReference type="PANTHER" id="PTHR30309">
    <property type="entry name" value="INNER MEMBRANE PROTEIN YGIH"/>
    <property type="match status" value="1"/>
</dbReference>
<dbReference type="Pfam" id="PF02660">
    <property type="entry name" value="G3P_acyltransf"/>
    <property type="match status" value="1"/>
</dbReference>
<dbReference type="SMART" id="SM01207">
    <property type="entry name" value="G3P_acyltransf"/>
    <property type="match status" value="1"/>
</dbReference>
<reference key="1">
    <citation type="journal article" date="2009" name="J. Bacteriol.">
        <title>Complete genome sequence of Rhodobacter sphaeroides KD131.</title>
        <authorList>
            <person name="Lim S.-K."/>
            <person name="Kim S.J."/>
            <person name="Cha S.H."/>
            <person name="Oh Y.-K."/>
            <person name="Rhee H.-J."/>
            <person name="Kim M.-S."/>
            <person name="Lee J.K."/>
        </authorList>
    </citation>
    <scope>NUCLEOTIDE SEQUENCE [LARGE SCALE GENOMIC DNA]</scope>
    <source>
        <strain>KD131 / KCTC 12085</strain>
    </source>
</reference>
<proteinExistence type="inferred from homology"/>
<evidence type="ECO:0000255" key="1">
    <source>
        <dbReference type="HAMAP-Rule" id="MF_01043"/>
    </source>
</evidence>
<keyword id="KW-0997">Cell inner membrane</keyword>
<keyword id="KW-1003">Cell membrane</keyword>
<keyword id="KW-0444">Lipid biosynthesis</keyword>
<keyword id="KW-0443">Lipid metabolism</keyword>
<keyword id="KW-0472">Membrane</keyword>
<keyword id="KW-0594">Phospholipid biosynthesis</keyword>
<keyword id="KW-1208">Phospholipid metabolism</keyword>
<keyword id="KW-0808">Transferase</keyword>
<keyword id="KW-0812">Transmembrane</keyword>
<keyword id="KW-1133">Transmembrane helix</keyword>